<dbReference type="EC" id="3.5.4.26"/>
<dbReference type="EC" id="1.1.1.193"/>
<dbReference type="EMBL" id="AL123456">
    <property type="protein sequence ID" value="CCP44168.1"/>
    <property type="molecule type" value="Genomic_DNA"/>
</dbReference>
<dbReference type="PIR" id="F70901">
    <property type="entry name" value="F70901"/>
</dbReference>
<dbReference type="RefSeq" id="NP_215925.1">
    <property type="nucleotide sequence ID" value="NC_000962.3"/>
</dbReference>
<dbReference type="RefSeq" id="WP_003898867.1">
    <property type="nucleotide sequence ID" value="NZ_NVQJ01000038.1"/>
</dbReference>
<dbReference type="SMR" id="P9WPH1"/>
<dbReference type="FunCoup" id="P9WPH1">
    <property type="interactions" value="264"/>
</dbReference>
<dbReference type="STRING" id="83332.Rv1409"/>
<dbReference type="PaxDb" id="83332-Rv1409"/>
<dbReference type="DNASU" id="886721"/>
<dbReference type="GeneID" id="886721"/>
<dbReference type="KEGG" id="mtu:Rv1409"/>
<dbReference type="KEGG" id="mtv:RVBD_1409"/>
<dbReference type="TubercuList" id="Rv1409"/>
<dbReference type="eggNOG" id="COG0117">
    <property type="taxonomic scope" value="Bacteria"/>
</dbReference>
<dbReference type="eggNOG" id="COG1985">
    <property type="taxonomic scope" value="Bacteria"/>
</dbReference>
<dbReference type="InParanoid" id="P9WPH1"/>
<dbReference type="OrthoDB" id="9800865at2"/>
<dbReference type="PhylomeDB" id="P9WPH1"/>
<dbReference type="UniPathway" id="UPA00275">
    <property type="reaction ID" value="UER00401"/>
</dbReference>
<dbReference type="UniPathway" id="UPA00275">
    <property type="reaction ID" value="UER00402"/>
</dbReference>
<dbReference type="Proteomes" id="UP000001584">
    <property type="component" value="Chromosome"/>
</dbReference>
<dbReference type="GO" id="GO:0005829">
    <property type="term" value="C:cytosol"/>
    <property type="evidence" value="ECO:0007005"/>
    <property type="project" value="MTBBASE"/>
</dbReference>
<dbReference type="GO" id="GO:0005886">
    <property type="term" value="C:plasma membrane"/>
    <property type="evidence" value="ECO:0007005"/>
    <property type="project" value="MTBBASE"/>
</dbReference>
<dbReference type="GO" id="GO:0008703">
    <property type="term" value="F:5-amino-6-(5-phosphoribosylamino)uracil reductase activity"/>
    <property type="evidence" value="ECO:0007669"/>
    <property type="project" value="UniProtKB-EC"/>
</dbReference>
<dbReference type="GO" id="GO:0008835">
    <property type="term" value="F:diaminohydroxyphosphoribosylaminopyrimidine deaminase activity"/>
    <property type="evidence" value="ECO:0000318"/>
    <property type="project" value="GO_Central"/>
</dbReference>
<dbReference type="GO" id="GO:0008270">
    <property type="term" value="F:zinc ion binding"/>
    <property type="evidence" value="ECO:0007669"/>
    <property type="project" value="InterPro"/>
</dbReference>
<dbReference type="GO" id="GO:0009231">
    <property type="term" value="P:riboflavin biosynthetic process"/>
    <property type="evidence" value="ECO:0007669"/>
    <property type="project" value="UniProtKB-UniPathway"/>
</dbReference>
<dbReference type="CDD" id="cd01284">
    <property type="entry name" value="Riboflavin_deaminase-reductase"/>
    <property type="match status" value="1"/>
</dbReference>
<dbReference type="Gene3D" id="3.40.140.10">
    <property type="entry name" value="Cytidine Deaminase, domain 2"/>
    <property type="match status" value="1"/>
</dbReference>
<dbReference type="Gene3D" id="3.40.430.10">
    <property type="entry name" value="Dihydrofolate Reductase, subunit A"/>
    <property type="match status" value="1"/>
</dbReference>
<dbReference type="InterPro" id="IPR016192">
    <property type="entry name" value="APOBEC/CMP_deaminase_Zn-bd"/>
</dbReference>
<dbReference type="InterPro" id="IPR002125">
    <property type="entry name" value="CMP_dCMP_dom"/>
</dbReference>
<dbReference type="InterPro" id="IPR016193">
    <property type="entry name" value="Cytidine_deaminase-like"/>
</dbReference>
<dbReference type="InterPro" id="IPR024072">
    <property type="entry name" value="DHFR-like_dom_sf"/>
</dbReference>
<dbReference type="InterPro" id="IPR004794">
    <property type="entry name" value="Eubact_RibD"/>
</dbReference>
<dbReference type="InterPro" id="IPR002734">
    <property type="entry name" value="RibDG_C"/>
</dbReference>
<dbReference type="InterPro" id="IPR050765">
    <property type="entry name" value="Riboflavin_Biosynth_HTPR"/>
</dbReference>
<dbReference type="NCBIfam" id="TIGR00326">
    <property type="entry name" value="eubact_ribD"/>
    <property type="match status" value="1"/>
</dbReference>
<dbReference type="PANTHER" id="PTHR38011:SF7">
    <property type="entry name" value="2,5-DIAMINO-6-RIBOSYLAMINO-4(3H)-PYRIMIDINONE 5'-PHOSPHATE REDUCTASE"/>
    <property type="match status" value="1"/>
</dbReference>
<dbReference type="PANTHER" id="PTHR38011">
    <property type="entry name" value="DIHYDROFOLATE REDUCTASE FAMILY PROTEIN (AFU_ORTHOLOGUE AFUA_8G06820)"/>
    <property type="match status" value="1"/>
</dbReference>
<dbReference type="Pfam" id="PF00383">
    <property type="entry name" value="dCMP_cyt_deam_1"/>
    <property type="match status" value="1"/>
</dbReference>
<dbReference type="Pfam" id="PF01872">
    <property type="entry name" value="RibD_C"/>
    <property type="match status" value="1"/>
</dbReference>
<dbReference type="PIRSF" id="PIRSF006769">
    <property type="entry name" value="RibD"/>
    <property type="match status" value="1"/>
</dbReference>
<dbReference type="SUPFAM" id="SSF53927">
    <property type="entry name" value="Cytidine deaminase-like"/>
    <property type="match status" value="1"/>
</dbReference>
<dbReference type="SUPFAM" id="SSF53597">
    <property type="entry name" value="Dihydrofolate reductase-like"/>
    <property type="match status" value="1"/>
</dbReference>
<dbReference type="PROSITE" id="PS00903">
    <property type="entry name" value="CYT_DCMP_DEAMINASES_1"/>
    <property type="match status" value="1"/>
</dbReference>
<dbReference type="PROSITE" id="PS51747">
    <property type="entry name" value="CYT_DCMP_DEAMINASES_2"/>
    <property type="match status" value="1"/>
</dbReference>
<evidence type="ECO:0000250" key="1"/>
<evidence type="ECO:0000255" key="2">
    <source>
        <dbReference type="PROSITE-ProRule" id="PRU01083"/>
    </source>
</evidence>
<evidence type="ECO:0000305" key="3"/>
<reference key="1">
    <citation type="journal article" date="1998" name="Nature">
        <title>Deciphering the biology of Mycobacterium tuberculosis from the complete genome sequence.</title>
        <authorList>
            <person name="Cole S.T."/>
            <person name="Brosch R."/>
            <person name="Parkhill J."/>
            <person name="Garnier T."/>
            <person name="Churcher C.M."/>
            <person name="Harris D.E."/>
            <person name="Gordon S.V."/>
            <person name="Eiglmeier K."/>
            <person name="Gas S."/>
            <person name="Barry C.E. III"/>
            <person name="Tekaia F."/>
            <person name="Badcock K."/>
            <person name="Basham D."/>
            <person name="Brown D."/>
            <person name="Chillingworth T."/>
            <person name="Connor R."/>
            <person name="Davies R.M."/>
            <person name="Devlin K."/>
            <person name="Feltwell T."/>
            <person name="Gentles S."/>
            <person name="Hamlin N."/>
            <person name="Holroyd S."/>
            <person name="Hornsby T."/>
            <person name="Jagels K."/>
            <person name="Krogh A."/>
            <person name="McLean J."/>
            <person name="Moule S."/>
            <person name="Murphy L.D."/>
            <person name="Oliver S."/>
            <person name="Osborne J."/>
            <person name="Quail M.A."/>
            <person name="Rajandream M.A."/>
            <person name="Rogers J."/>
            <person name="Rutter S."/>
            <person name="Seeger K."/>
            <person name="Skelton S."/>
            <person name="Squares S."/>
            <person name="Squares R."/>
            <person name="Sulston J.E."/>
            <person name="Taylor K."/>
            <person name="Whitehead S."/>
            <person name="Barrell B.G."/>
        </authorList>
    </citation>
    <scope>NUCLEOTIDE SEQUENCE [LARGE SCALE GENOMIC DNA]</scope>
    <source>
        <strain>ATCC 25618 / H37Rv</strain>
    </source>
</reference>
<reference key="2">
    <citation type="journal article" date="2008" name="BMC Syst. Biol.">
        <title>targetTB: a target identification pipeline for Mycobacterium tuberculosis through an interactome, reactome and genome-scale structural analysis.</title>
        <authorList>
            <person name="Raman K."/>
            <person name="Yeturu K."/>
            <person name="Chandra N."/>
        </authorList>
    </citation>
    <scope>IDENTIFICATION AS A DRUG TARGET [LARGE SCALE ANALYSIS]</scope>
</reference>
<reference key="3">
    <citation type="journal article" date="2011" name="Mol. Cell. Proteomics">
        <title>Proteogenomic analysis of Mycobacterium tuberculosis by high resolution mass spectrometry.</title>
        <authorList>
            <person name="Kelkar D.S."/>
            <person name="Kumar D."/>
            <person name="Kumar P."/>
            <person name="Balakrishnan L."/>
            <person name="Muthusamy B."/>
            <person name="Yadav A.K."/>
            <person name="Shrivastava P."/>
            <person name="Marimuthu A."/>
            <person name="Anand S."/>
            <person name="Sundaram H."/>
            <person name="Kingsbury R."/>
            <person name="Harsha H.C."/>
            <person name="Nair B."/>
            <person name="Prasad T.S."/>
            <person name="Chauhan D.S."/>
            <person name="Katoch K."/>
            <person name="Katoch V.M."/>
            <person name="Kumar P."/>
            <person name="Chaerkady R."/>
            <person name="Ramachandran S."/>
            <person name="Dash D."/>
            <person name="Pandey A."/>
        </authorList>
    </citation>
    <scope>IDENTIFICATION BY MASS SPECTROMETRY [LARGE SCALE ANALYSIS]</scope>
    <source>
        <strain>ATCC 25618 / H37Rv</strain>
    </source>
</reference>
<comment type="function">
    <text evidence="1">Converts 2,5-diamino-6-(ribosylamino)-4(3h)-pyrimidinone 5'-phosphate into 5-amino-6-(ribosylamino)-2,4(1h,3h)-pyrimidinedione 5'-phosphate.</text>
</comment>
<comment type="catalytic activity">
    <reaction>
        <text>2,5-diamino-6-hydroxy-4-(5-phosphoribosylamino)-pyrimidine + H2O + H(+) = 5-amino-6-(5-phospho-D-ribosylamino)uracil + NH4(+)</text>
        <dbReference type="Rhea" id="RHEA:21868"/>
        <dbReference type="ChEBI" id="CHEBI:15377"/>
        <dbReference type="ChEBI" id="CHEBI:15378"/>
        <dbReference type="ChEBI" id="CHEBI:28938"/>
        <dbReference type="ChEBI" id="CHEBI:58453"/>
        <dbReference type="ChEBI" id="CHEBI:58614"/>
        <dbReference type="EC" id="3.5.4.26"/>
    </reaction>
</comment>
<comment type="catalytic activity">
    <reaction>
        <text>5-amino-6-(5-phospho-D-ribitylamino)uracil + NADP(+) = 5-amino-6-(5-phospho-D-ribosylamino)uracil + NADPH + H(+)</text>
        <dbReference type="Rhea" id="RHEA:17845"/>
        <dbReference type="ChEBI" id="CHEBI:15378"/>
        <dbReference type="ChEBI" id="CHEBI:57783"/>
        <dbReference type="ChEBI" id="CHEBI:58349"/>
        <dbReference type="ChEBI" id="CHEBI:58421"/>
        <dbReference type="ChEBI" id="CHEBI:58453"/>
        <dbReference type="EC" id="1.1.1.193"/>
    </reaction>
</comment>
<comment type="cofactor">
    <cofactor evidence="1">
        <name>Zn(2+)</name>
        <dbReference type="ChEBI" id="CHEBI:29105"/>
    </cofactor>
    <text evidence="1">Binds 1 zinc ion.</text>
</comment>
<comment type="pathway">
    <text>Cofactor biosynthesis; riboflavin biosynthesis; 5-amino-6-(D-ribitylamino)uracil from GTP: step 2/4.</text>
</comment>
<comment type="pathway">
    <text>Cofactor biosynthesis; riboflavin biosynthesis; 5-amino-6-(D-ribitylamino)uracil from GTP: step 3/4.</text>
</comment>
<comment type="miscellaneous">
    <text>Was identified as a high-confidence drug target.</text>
</comment>
<comment type="similarity">
    <text evidence="3">In the N-terminal section; belongs to the cytidine and deoxycytidylate deaminase family.</text>
</comment>
<comment type="similarity">
    <text evidence="3">In the C-terminal section; belongs to the HTP reductase family.</text>
</comment>
<sequence length="339" mass="35367">MNVEQVKSIDEAMGLAIEHSYQVKGTTYPKPPVGAVIVDPNGRIVGAGGTEPAGGDHAEVVALRRAGGLAAGAIVVVTMEPCNHYGKTPPCVNALIEARVGTVVYAVADPNGIAGGGAGRLSAAGLQVRSGVLAEQVAAGPLREWLHKQRTGLPHVTWKYATSIDGRSAAADGSSQWISSEAARLDLHRRRAIADAILVGTGTVLADDPALTARLADGSLAPQQPLRVVVGKRDIPPEARVLNDEARTMMIRTHEPMEVLRALSDRTDVLLEGGPTLAGAFLRAGAINRILAYVAPILLGGPVTAVDDVGVSNITNALRWQFDSVEKVGPDLLLSLVAR</sequence>
<accession>P9WPH1</accession>
<accession>L0T9J7</accession>
<accession>P71677</accession>
<feature type="chain" id="PRO_0000171723" description="Riboflavin biosynthesis protein RibD">
    <location>
        <begin position="1"/>
        <end position="339"/>
    </location>
</feature>
<feature type="domain" description="CMP/dCMP-type deaminase" evidence="2">
    <location>
        <begin position="7"/>
        <end position="129"/>
    </location>
</feature>
<feature type="region of interest" description="Deaminase">
    <location>
        <begin position="1"/>
        <end position="152"/>
    </location>
</feature>
<feature type="region of interest" description="Reductase">
    <location>
        <begin position="153"/>
        <end position="339"/>
    </location>
</feature>
<feature type="active site" description="Proton donor" evidence="1">
    <location>
        <position position="59"/>
    </location>
</feature>
<feature type="binding site" evidence="1">
    <location>
        <position position="57"/>
    </location>
    <ligand>
        <name>Zn(2+)</name>
        <dbReference type="ChEBI" id="CHEBI:29105"/>
        <note>catalytic</note>
    </ligand>
</feature>
<feature type="binding site" evidence="1">
    <location>
        <position position="82"/>
    </location>
    <ligand>
        <name>Zn(2+)</name>
        <dbReference type="ChEBI" id="CHEBI:29105"/>
        <note>catalytic</note>
    </ligand>
</feature>
<feature type="binding site" evidence="1">
    <location>
        <position position="91"/>
    </location>
    <ligand>
        <name>Zn(2+)</name>
        <dbReference type="ChEBI" id="CHEBI:29105"/>
        <note>catalytic</note>
    </ligand>
</feature>
<feature type="binding site" evidence="1">
    <location>
        <position position="161"/>
    </location>
    <ligand>
        <name>NADP(+)</name>
        <dbReference type="ChEBI" id="CHEBI:58349"/>
    </ligand>
</feature>
<feature type="binding site" evidence="1">
    <location>
        <begin position="168"/>
        <end position="171"/>
    </location>
    <ligand>
        <name>NADP(+)</name>
        <dbReference type="ChEBI" id="CHEBI:58349"/>
    </ligand>
</feature>
<feature type="binding site" evidence="1">
    <location>
        <position position="175"/>
    </location>
    <ligand>
        <name>substrate</name>
    </ligand>
</feature>
<feature type="binding site" evidence="1">
    <location>
        <position position="177"/>
    </location>
    <ligand>
        <name>NADP(+)</name>
        <dbReference type="ChEBI" id="CHEBI:58349"/>
    </ligand>
</feature>
<feature type="binding site" evidence="1">
    <location>
        <position position="191"/>
    </location>
    <ligand>
        <name>substrate</name>
    </ligand>
</feature>
<feature type="binding site" evidence="1">
    <location>
        <position position="203"/>
    </location>
    <ligand>
        <name>NADP(+)</name>
        <dbReference type="ChEBI" id="CHEBI:58349"/>
    </ligand>
</feature>
<feature type="binding site" evidence="1">
    <location>
        <position position="207"/>
    </location>
    <ligand>
        <name>NADP(+)</name>
        <dbReference type="ChEBI" id="CHEBI:58349"/>
    </ligand>
</feature>
<feature type="binding site" evidence="1">
    <location>
        <position position="211"/>
    </location>
    <ligand>
        <name>substrate</name>
    </ligand>
</feature>
<feature type="binding site" evidence="1">
    <location>
        <position position="214"/>
    </location>
    <ligand>
        <name>substrate</name>
    </ligand>
</feature>
<feature type="binding site" evidence="1">
    <location>
        <position position="272"/>
    </location>
    <ligand>
        <name>substrate</name>
    </ligand>
</feature>
<feature type="binding site" evidence="1">
    <location>
        <begin position="274"/>
        <end position="280"/>
    </location>
    <ligand>
        <name>NADP(+)</name>
        <dbReference type="ChEBI" id="CHEBI:58349"/>
    </ligand>
</feature>
<name>RIBD_MYCTU</name>
<protein>
    <recommendedName>
        <fullName>Riboflavin biosynthesis protein RibD</fullName>
    </recommendedName>
    <domain>
        <recommendedName>
            <fullName>Diaminohydroxyphosphoribosylaminopyrimidine deaminase</fullName>
            <shortName>DRAP deaminase</shortName>
            <ecNumber>3.5.4.26</ecNumber>
        </recommendedName>
        <alternativeName>
            <fullName>Riboflavin-specific deaminase</fullName>
        </alternativeName>
    </domain>
    <domain>
        <recommendedName>
            <fullName>5-amino-6-(5-phosphoribosylamino)uracil reductase</fullName>
            <ecNumber>1.1.1.193</ecNumber>
        </recommendedName>
        <alternativeName>
            <fullName>HTP reductase</fullName>
        </alternativeName>
    </domain>
</protein>
<proteinExistence type="evidence at protein level"/>
<gene>
    <name type="primary">ribD</name>
    <name type="synonym">ribG</name>
    <name type="ordered locus">Rv1409</name>
    <name type="ORF">MTCY21B4.26</name>
</gene>
<organism>
    <name type="scientific">Mycobacterium tuberculosis (strain ATCC 25618 / H37Rv)</name>
    <dbReference type="NCBI Taxonomy" id="83332"/>
    <lineage>
        <taxon>Bacteria</taxon>
        <taxon>Bacillati</taxon>
        <taxon>Actinomycetota</taxon>
        <taxon>Actinomycetes</taxon>
        <taxon>Mycobacteriales</taxon>
        <taxon>Mycobacteriaceae</taxon>
        <taxon>Mycobacterium</taxon>
        <taxon>Mycobacterium tuberculosis complex</taxon>
    </lineage>
</organism>
<keyword id="KW-0378">Hydrolase</keyword>
<keyword id="KW-0479">Metal-binding</keyword>
<keyword id="KW-0511">Multifunctional enzyme</keyword>
<keyword id="KW-0521">NADP</keyword>
<keyword id="KW-0560">Oxidoreductase</keyword>
<keyword id="KW-1185">Reference proteome</keyword>
<keyword id="KW-0686">Riboflavin biosynthesis</keyword>
<keyword id="KW-0862">Zinc</keyword>